<name>TBX3_CHICK</name>
<comment type="function">
    <text evidence="1">Transcriptional repressor involved in developmental processes. Binds to the palindromic T site 5'-TTCACACCTAGGTGTGAA-3' DNA sequence, or a half-site, which are present in the regulatory region of several genes. Probably plays a role in limb pattern formation.</text>
</comment>
<comment type="subcellular location">
    <subcellularLocation>
        <location evidence="2">Nucleus</location>
    </subcellularLocation>
</comment>
<organism>
    <name type="scientific">Gallus gallus</name>
    <name type="common">Chicken</name>
    <dbReference type="NCBI Taxonomy" id="9031"/>
    <lineage>
        <taxon>Eukaryota</taxon>
        <taxon>Metazoa</taxon>
        <taxon>Chordata</taxon>
        <taxon>Craniata</taxon>
        <taxon>Vertebrata</taxon>
        <taxon>Euteleostomi</taxon>
        <taxon>Archelosauria</taxon>
        <taxon>Archosauria</taxon>
        <taxon>Dinosauria</taxon>
        <taxon>Saurischia</taxon>
        <taxon>Theropoda</taxon>
        <taxon>Coelurosauria</taxon>
        <taxon>Aves</taxon>
        <taxon>Neognathae</taxon>
        <taxon>Galloanserae</taxon>
        <taxon>Galliformes</taxon>
        <taxon>Phasianidae</taxon>
        <taxon>Phasianinae</taxon>
        <taxon>Gallus</taxon>
    </lineage>
</organism>
<gene>
    <name type="primary">TBX3</name>
</gene>
<reference key="1">
    <citation type="journal article" date="1998" name="Development">
        <title>Tbx genes and limb identity in chick embryo development.</title>
        <authorList>
            <person name="Issac A."/>
            <person name="Rodriguez-Esteban C."/>
            <person name="Ryan A."/>
            <person name="Altabef M."/>
            <person name="Tsukui T."/>
            <person name="Patel K."/>
            <person name="Tickle C."/>
            <person name="Izpisua-Belmonte J.-C."/>
        </authorList>
    </citation>
    <scope>NUCLEOTIDE SEQUENCE [MRNA]</scope>
</reference>
<reference key="2">
    <citation type="journal article" date="1998" name="Development">
        <title>Differential regulation of T-box and homeobox transcription factors suggests roles in controlling chick limb-type identity.</title>
        <authorList>
            <person name="Logan M."/>
            <person name="Simon H.-G."/>
            <person name="Tabin C."/>
        </authorList>
    </citation>
    <scope>NUCLEOTIDE SEQUENCE [MRNA] OF 114-295</scope>
</reference>
<keyword id="KW-0217">Developmental protein</keyword>
<keyword id="KW-0238">DNA-binding</keyword>
<keyword id="KW-0539">Nucleus</keyword>
<keyword id="KW-1185">Reference proteome</keyword>
<keyword id="KW-0678">Repressor</keyword>
<keyword id="KW-0804">Transcription</keyword>
<keyword id="KW-0805">Transcription regulation</keyword>
<dbReference type="EMBL" id="AF033669">
    <property type="protein sequence ID" value="AAC41297.1"/>
    <property type="molecule type" value="mRNA"/>
</dbReference>
<dbReference type="EMBL" id="AF069394">
    <property type="protein sequence ID" value="AAC23681.1"/>
    <property type="molecule type" value="mRNA"/>
</dbReference>
<dbReference type="STRING" id="9031.ENSGALP00000045049"/>
<dbReference type="PaxDb" id="9031-ENSGALP00000013415"/>
<dbReference type="VEuPathDB" id="HostDB:geneid_374202"/>
<dbReference type="eggNOG" id="KOG3585">
    <property type="taxonomic scope" value="Eukaryota"/>
</dbReference>
<dbReference type="InParanoid" id="O73718"/>
<dbReference type="OrthoDB" id="7442607at2759"/>
<dbReference type="PhylomeDB" id="O73718"/>
<dbReference type="Proteomes" id="UP000000539">
    <property type="component" value="Unassembled WGS sequence"/>
</dbReference>
<dbReference type="GO" id="GO:0000785">
    <property type="term" value="C:chromatin"/>
    <property type="evidence" value="ECO:0000318"/>
    <property type="project" value="GO_Central"/>
</dbReference>
<dbReference type="GO" id="GO:0005634">
    <property type="term" value="C:nucleus"/>
    <property type="evidence" value="ECO:0000250"/>
    <property type="project" value="UniProtKB"/>
</dbReference>
<dbReference type="GO" id="GO:0000981">
    <property type="term" value="F:DNA-binding transcription factor activity, RNA polymerase II-specific"/>
    <property type="evidence" value="ECO:0000318"/>
    <property type="project" value="GO_Central"/>
</dbReference>
<dbReference type="GO" id="GO:0000978">
    <property type="term" value="F:RNA polymerase II cis-regulatory region sequence-specific DNA binding"/>
    <property type="evidence" value="ECO:0000318"/>
    <property type="project" value="GO_Central"/>
</dbReference>
<dbReference type="GO" id="GO:0043565">
    <property type="term" value="F:sequence-specific DNA binding"/>
    <property type="evidence" value="ECO:0000250"/>
    <property type="project" value="UniProtKB"/>
</dbReference>
<dbReference type="GO" id="GO:0008595">
    <property type="term" value="P:anterior/posterior axis specification, embryo"/>
    <property type="evidence" value="ECO:0000250"/>
    <property type="project" value="UniProtKB"/>
</dbReference>
<dbReference type="GO" id="GO:0001708">
    <property type="term" value="P:cell fate specification"/>
    <property type="evidence" value="ECO:0000318"/>
    <property type="project" value="GO_Central"/>
</dbReference>
<dbReference type="GO" id="GO:0090398">
    <property type="term" value="P:cellular senescence"/>
    <property type="evidence" value="ECO:0000250"/>
    <property type="project" value="UniProtKB"/>
</dbReference>
<dbReference type="GO" id="GO:0042733">
    <property type="term" value="P:embryonic digit morphogenesis"/>
    <property type="evidence" value="ECO:0000250"/>
    <property type="project" value="UniProtKB"/>
</dbReference>
<dbReference type="GO" id="GO:0035115">
    <property type="term" value="P:embryonic forelimb morphogenesis"/>
    <property type="evidence" value="ECO:0000250"/>
    <property type="project" value="UniProtKB"/>
</dbReference>
<dbReference type="GO" id="GO:0030540">
    <property type="term" value="P:female genitalia development"/>
    <property type="evidence" value="ECO:0000250"/>
    <property type="project" value="UniProtKB"/>
</dbReference>
<dbReference type="GO" id="GO:0046884">
    <property type="term" value="P:follicle-stimulating hormone secretion"/>
    <property type="evidence" value="ECO:0000250"/>
    <property type="project" value="UniProtKB"/>
</dbReference>
<dbReference type="GO" id="GO:0032275">
    <property type="term" value="P:luteinizing hormone secretion"/>
    <property type="evidence" value="ECO:0000250"/>
    <property type="project" value="UniProtKB"/>
</dbReference>
<dbReference type="GO" id="GO:0030539">
    <property type="term" value="P:male genitalia development"/>
    <property type="evidence" value="ECO:0000250"/>
    <property type="project" value="UniProtKB"/>
</dbReference>
<dbReference type="GO" id="GO:0048332">
    <property type="term" value="P:mesoderm morphogenesis"/>
    <property type="evidence" value="ECO:0000250"/>
    <property type="project" value="UniProtKB"/>
</dbReference>
<dbReference type="GO" id="GO:0043066">
    <property type="term" value="P:negative regulation of apoptotic process"/>
    <property type="evidence" value="ECO:0000250"/>
    <property type="project" value="UniProtKB"/>
</dbReference>
<dbReference type="GO" id="GO:0045892">
    <property type="term" value="P:negative regulation of DNA-templated transcription"/>
    <property type="evidence" value="ECO:0000250"/>
    <property type="project" value="UniProtKB"/>
</dbReference>
<dbReference type="GO" id="GO:0045662">
    <property type="term" value="P:negative regulation of myoblast differentiation"/>
    <property type="evidence" value="ECO:0000250"/>
    <property type="project" value="UniProtKB"/>
</dbReference>
<dbReference type="GO" id="GO:0045787">
    <property type="term" value="P:positive regulation of cell cycle"/>
    <property type="evidence" value="ECO:0000250"/>
    <property type="project" value="UniProtKB"/>
</dbReference>
<dbReference type="GO" id="GO:0045893">
    <property type="term" value="P:positive regulation of DNA-templated transcription"/>
    <property type="evidence" value="ECO:0007669"/>
    <property type="project" value="InterPro"/>
</dbReference>
<dbReference type="GO" id="GO:0006357">
    <property type="term" value="P:regulation of transcription by RNA polymerase II"/>
    <property type="evidence" value="ECO:0000318"/>
    <property type="project" value="GO_Central"/>
</dbReference>
<dbReference type="GO" id="GO:0001501">
    <property type="term" value="P:skeletal system development"/>
    <property type="evidence" value="ECO:0000250"/>
    <property type="project" value="UniProtKB"/>
</dbReference>
<dbReference type="CDD" id="cd20188">
    <property type="entry name" value="T-box_TBX2_3-like"/>
    <property type="match status" value="1"/>
</dbReference>
<dbReference type="FunFam" id="2.60.40.820:FF:000003">
    <property type="entry name" value="T-box transcription factor TBX3"/>
    <property type="match status" value="1"/>
</dbReference>
<dbReference type="Gene3D" id="2.60.40.820">
    <property type="entry name" value="Transcription factor, T-box"/>
    <property type="match status" value="1"/>
</dbReference>
<dbReference type="InterPro" id="IPR008967">
    <property type="entry name" value="p53-like_TF_DNA-bd_sf"/>
</dbReference>
<dbReference type="InterPro" id="IPR046360">
    <property type="entry name" value="T-box_DNA-bd"/>
</dbReference>
<dbReference type="InterPro" id="IPR036960">
    <property type="entry name" value="T-box_sf"/>
</dbReference>
<dbReference type="InterPro" id="IPR022582">
    <property type="entry name" value="TBX2/3_TAD"/>
</dbReference>
<dbReference type="InterPro" id="IPR002070">
    <property type="entry name" value="TF_Brachyury"/>
</dbReference>
<dbReference type="InterPro" id="IPR001699">
    <property type="entry name" value="TF_T-box"/>
</dbReference>
<dbReference type="InterPro" id="IPR018186">
    <property type="entry name" value="TF_T-box_CS"/>
</dbReference>
<dbReference type="PANTHER" id="PTHR11267">
    <property type="entry name" value="T-BOX PROTEIN-RELATED"/>
    <property type="match status" value="1"/>
</dbReference>
<dbReference type="PANTHER" id="PTHR11267:SF91">
    <property type="entry name" value="T-BOX TRANSCRIPTION FACTOR TBX3"/>
    <property type="match status" value="1"/>
</dbReference>
<dbReference type="Pfam" id="PF00907">
    <property type="entry name" value="T-box"/>
    <property type="match status" value="1"/>
</dbReference>
<dbReference type="Pfam" id="PF12598">
    <property type="entry name" value="TBX2-3_TAD"/>
    <property type="match status" value="1"/>
</dbReference>
<dbReference type="PRINTS" id="PR00938">
    <property type="entry name" value="BRACHYURY"/>
</dbReference>
<dbReference type="PRINTS" id="PR00937">
    <property type="entry name" value="TBOX"/>
</dbReference>
<dbReference type="SMART" id="SM00425">
    <property type="entry name" value="TBOX"/>
    <property type="match status" value="1"/>
</dbReference>
<dbReference type="SUPFAM" id="SSF49417">
    <property type="entry name" value="p53-like transcription factors"/>
    <property type="match status" value="1"/>
</dbReference>
<dbReference type="PROSITE" id="PS01283">
    <property type="entry name" value="TBOX_1"/>
    <property type="match status" value="1"/>
</dbReference>
<dbReference type="PROSITE" id="PS01264">
    <property type="entry name" value="TBOX_2"/>
    <property type="match status" value="1"/>
</dbReference>
<dbReference type="PROSITE" id="PS50252">
    <property type="entry name" value="TBOX_3"/>
    <property type="match status" value="1"/>
</dbReference>
<evidence type="ECO:0000250" key="1">
    <source>
        <dbReference type="UniProtKB" id="O15119"/>
    </source>
</evidence>
<evidence type="ECO:0000255" key="2">
    <source>
        <dbReference type="PROSITE-ProRule" id="PRU00201"/>
    </source>
</evidence>
<evidence type="ECO:0000256" key="3">
    <source>
        <dbReference type="SAM" id="MobiDB-lite"/>
    </source>
</evidence>
<proteinExistence type="evidence at transcript level"/>
<feature type="chain" id="PRO_0000184431" description="T-box transcription factor TBX3">
    <location>
        <begin position="1"/>
        <end position="414" status="greater than"/>
    </location>
</feature>
<feature type="DNA-binding region" description="T-box" evidence="2">
    <location>
        <begin position="114"/>
        <end position="287"/>
    </location>
</feature>
<feature type="region of interest" description="Disordered" evidence="3">
    <location>
        <begin position="359"/>
        <end position="414"/>
    </location>
</feature>
<feature type="non-terminal residue">
    <location>
        <position position="414"/>
    </location>
</feature>
<accession>O73718</accession>
<sequence>MNIPMRDPVIPGTSMAYHPFLPHRAPDFAMSAVLGHQPPFFPALALPPNGAAALSLPGALAKPIMDQLVGAAETAIPFSSLGQQAAAHLRPLKTLEPEEEVEDDPKVHLEAKELWEQFHKRGTEMVITKSGRRMFPPFKVRCTGLDKKAKYILLMDIVAADDCRYKFHNSRWMVAGKADPEMPKRMYIHPDSPATGEQWMSKVVTFHKLKLTNNISDKHGFTILNSMHKYQPRFHIVRANDILKLPYSTFRTYVFPETEFIAVTAYQNDKITQLKIDNNPFAKGFRDTGNGRREKRKQLTLQSMRVYDERQKKENPTSDESSNEQTAFKCFAQSSCPAVPAVGTSSFKDLCPGEVDRDXDSXDDXXLEXSEWGKISTTTXTHPWXQPAXGRQRVTTXGTKGAAVPKATSSPXTR</sequence>
<protein>
    <recommendedName>
        <fullName>T-box transcription factor TBX3</fullName>
        <shortName>T-box protein 3</shortName>
    </recommendedName>
</protein>